<dbReference type="EMBL" id="CP001158">
    <property type="protein sequence ID" value="ACL29971.1"/>
    <property type="molecule type" value="Genomic_DNA"/>
</dbReference>
<dbReference type="RefSeq" id="WP_009874107.1">
    <property type="nucleotide sequence ID" value="NC_011834.1"/>
</dbReference>
<dbReference type="SMR" id="B8D756"/>
<dbReference type="KEGG" id="bau:BUAPTUC7_150"/>
<dbReference type="HOGENOM" id="CLU_160655_4_0_6"/>
<dbReference type="GO" id="GO:0005829">
    <property type="term" value="C:cytosol"/>
    <property type="evidence" value="ECO:0007669"/>
    <property type="project" value="TreeGrafter"/>
</dbReference>
<dbReference type="GO" id="GO:0015935">
    <property type="term" value="C:small ribosomal subunit"/>
    <property type="evidence" value="ECO:0007669"/>
    <property type="project" value="TreeGrafter"/>
</dbReference>
<dbReference type="GO" id="GO:0070181">
    <property type="term" value="F:small ribosomal subunit rRNA binding"/>
    <property type="evidence" value="ECO:0007669"/>
    <property type="project" value="TreeGrafter"/>
</dbReference>
<dbReference type="GO" id="GO:0003735">
    <property type="term" value="F:structural constituent of ribosome"/>
    <property type="evidence" value="ECO:0007669"/>
    <property type="project" value="InterPro"/>
</dbReference>
<dbReference type="GO" id="GO:0006412">
    <property type="term" value="P:translation"/>
    <property type="evidence" value="ECO:0007669"/>
    <property type="project" value="UniProtKB-UniRule"/>
</dbReference>
<dbReference type="FunFam" id="1.20.58.110:FF:000001">
    <property type="entry name" value="30S ribosomal protein S20"/>
    <property type="match status" value="1"/>
</dbReference>
<dbReference type="Gene3D" id="1.20.58.110">
    <property type="entry name" value="Ribosomal protein S20"/>
    <property type="match status" value="1"/>
</dbReference>
<dbReference type="HAMAP" id="MF_00500">
    <property type="entry name" value="Ribosomal_bS20"/>
    <property type="match status" value="1"/>
</dbReference>
<dbReference type="InterPro" id="IPR002583">
    <property type="entry name" value="Ribosomal_bS20"/>
</dbReference>
<dbReference type="InterPro" id="IPR036510">
    <property type="entry name" value="Ribosomal_bS20_sf"/>
</dbReference>
<dbReference type="NCBIfam" id="TIGR00029">
    <property type="entry name" value="S20"/>
    <property type="match status" value="1"/>
</dbReference>
<dbReference type="PANTHER" id="PTHR33398">
    <property type="entry name" value="30S RIBOSOMAL PROTEIN S20"/>
    <property type="match status" value="1"/>
</dbReference>
<dbReference type="PANTHER" id="PTHR33398:SF1">
    <property type="entry name" value="SMALL RIBOSOMAL SUBUNIT PROTEIN BS20C"/>
    <property type="match status" value="1"/>
</dbReference>
<dbReference type="Pfam" id="PF01649">
    <property type="entry name" value="Ribosomal_S20p"/>
    <property type="match status" value="1"/>
</dbReference>
<dbReference type="SUPFAM" id="SSF46992">
    <property type="entry name" value="Ribosomal protein S20"/>
    <property type="match status" value="1"/>
</dbReference>
<reference key="1">
    <citation type="journal article" date="2009" name="Science">
        <title>The dynamics and time scale of ongoing genomic erosion in symbiotic bacteria.</title>
        <authorList>
            <person name="Moran N.A."/>
            <person name="McLaughlin H.J."/>
            <person name="Sorek R."/>
        </authorList>
    </citation>
    <scope>NUCLEOTIDE SEQUENCE [LARGE SCALE GENOMIC DNA]</scope>
    <source>
        <strain>Tuc7</strain>
    </source>
</reference>
<organism>
    <name type="scientific">Buchnera aphidicola subsp. Acyrthosiphon pisum (strain Tuc7)</name>
    <dbReference type="NCBI Taxonomy" id="561501"/>
    <lineage>
        <taxon>Bacteria</taxon>
        <taxon>Pseudomonadati</taxon>
        <taxon>Pseudomonadota</taxon>
        <taxon>Gammaproteobacteria</taxon>
        <taxon>Enterobacterales</taxon>
        <taxon>Erwiniaceae</taxon>
        <taxon>Buchnera</taxon>
    </lineage>
</organism>
<name>RS20_BUCAT</name>
<feature type="chain" id="PRO_1000194230" description="Small ribosomal subunit protein bS20">
    <location>
        <begin position="1"/>
        <end position="89"/>
    </location>
</feature>
<feature type="region of interest" description="Disordered" evidence="2">
    <location>
        <begin position="1"/>
        <end position="26"/>
    </location>
</feature>
<feature type="compositionally biased region" description="Basic residues" evidence="2">
    <location>
        <begin position="16"/>
        <end position="26"/>
    </location>
</feature>
<gene>
    <name evidence="1" type="primary">rpsT</name>
    <name type="ordered locus">BUAPTUC7_150</name>
</gene>
<keyword id="KW-0687">Ribonucleoprotein</keyword>
<keyword id="KW-0689">Ribosomal protein</keyword>
<keyword id="KW-0694">RNA-binding</keyword>
<keyword id="KW-0699">rRNA-binding</keyword>
<sequence>MANIKASKKDALTSEKRRKKNSSRRSMIRTFVKKVRVAIMSGNKTTAEDAFKKMQPIIDSHVNKGLIHKNKAARYKSNLSLQIKKISKI</sequence>
<evidence type="ECO:0000255" key="1">
    <source>
        <dbReference type="HAMAP-Rule" id="MF_00500"/>
    </source>
</evidence>
<evidence type="ECO:0000256" key="2">
    <source>
        <dbReference type="SAM" id="MobiDB-lite"/>
    </source>
</evidence>
<evidence type="ECO:0000305" key="3"/>
<accession>B8D756</accession>
<comment type="function">
    <text evidence="1">Binds directly to 16S ribosomal RNA.</text>
</comment>
<comment type="similarity">
    <text evidence="1">Belongs to the bacterial ribosomal protein bS20 family.</text>
</comment>
<proteinExistence type="inferred from homology"/>
<protein>
    <recommendedName>
        <fullName evidence="1">Small ribosomal subunit protein bS20</fullName>
    </recommendedName>
    <alternativeName>
        <fullName evidence="3">30S ribosomal protein S20</fullName>
    </alternativeName>
</protein>